<keyword id="KW-0597">Phosphoprotein</keyword>
<keyword id="KW-1185">Reference proteome</keyword>
<keyword id="KW-0694">RNA-binding</keyword>
<feature type="chain" id="PRO_0000372850" description="Probable RNA-binding protein CG14230">
    <location>
        <begin position="1"/>
        <end position="580"/>
    </location>
</feature>
<feature type="domain" description="RRM" evidence="1">
    <location>
        <begin position="4"/>
        <end position="81"/>
    </location>
</feature>
<feature type="region of interest" description="Disordered" evidence="2">
    <location>
        <begin position="89"/>
        <end position="131"/>
    </location>
</feature>
<feature type="region of interest" description="Disordered" evidence="2">
    <location>
        <begin position="173"/>
        <end position="211"/>
    </location>
</feature>
<feature type="region of interest" description="Disordered" evidence="2">
    <location>
        <begin position="254"/>
        <end position="316"/>
    </location>
</feature>
<feature type="region of interest" description="Disordered" evidence="2">
    <location>
        <begin position="333"/>
        <end position="395"/>
    </location>
</feature>
<feature type="region of interest" description="Disordered" evidence="2">
    <location>
        <begin position="463"/>
        <end position="520"/>
    </location>
</feature>
<feature type="compositionally biased region" description="Basic and acidic residues" evidence="2">
    <location>
        <begin position="89"/>
        <end position="100"/>
    </location>
</feature>
<feature type="compositionally biased region" description="Polar residues" evidence="2">
    <location>
        <begin position="110"/>
        <end position="120"/>
    </location>
</feature>
<feature type="compositionally biased region" description="Acidic residues" evidence="2">
    <location>
        <begin position="254"/>
        <end position="263"/>
    </location>
</feature>
<feature type="compositionally biased region" description="Acidic residues" evidence="2">
    <location>
        <begin position="298"/>
        <end position="313"/>
    </location>
</feature>
<feature type="compositionally biased region" description="Basic and acidic residues" evidence="2">
    <location>
        <begin position="348"/>
        <end position="358"/>
    </location>
</feature>
<feature type="compositionally biased region" description="Basic and acidic residues" evidence="2">
    <location>
        <begin position="365"/>
        <end position="377"/>
    </location>
</feature>
<feature type="compositionally biased region" description="Polar residues" evidence="2">
    <location>
        <begin position="386"/>
        <end position="395"/>
    </location>
</feature>
<feature type="modified residue" description="Phosphoserine" evidence="3">
    <location>
        <position position="231"/>
    </location>
</feature>
<feature type="modified residue" description="Phosphoserine" evidence="4">
    <location>
        <position position="468"/>
    </location>
</feature>
<feature type="modified residue" description="Phosphothreonine" evidence="4">
    <location>
        <position position="475"/>
    </location>
</feature>
<evidence type="ECO:0000255" key="1">
    <source>
        <dbReference type="PROSITE-ProRule" id="PRU00176"/>
    </source>
</evidence>
<evidence type="ECO:0000256" key="2">
    <source>
        <dbReference type="SAM" id="MobiDB-lite"/>
    </source>
</evidence>
<evidence type="ECO:0000269" key="3">
    <source>
    </source>
</evidence>
<evidence type="ECO:0000269" key="4">
    <source>
    </source>
</evidence>
<name>Y4230_DROME</name>
<reference key="1">
    <citation type="journal article" date="2000" name="Science">
        <title>The genome sequence of Drosophila melanogaster.</title>
        <authorList>
            <person name="Adams M.D."/>
            <person name="Celniker S.E."/>
            <person name="Holt R.A."/>
            <person name="Evans C.A."/>
            <person name="Gocayne J.D."/>
            <person name="Amanatides P.G."/>
            <person name="Scherer S.E."/>
            <person name="Li P.W."/>
            <person name="Hoskins R.A."/>
            <person name="Galle R.F."/>
            <person name="George R.A."/>
            <person name="Lewis S.E."/>
            <person name="Richards S."/>
            <person name="Ashburner M."/>
            <person name="Henderson S.N."/>
            <person name="Sutton G.G."/>
            <person name="Wortman J.R."/>
            <person name="Yandell M.D."/>
            <person name="Zhang Q."/>
            <person name="Chen L.X."/>
            <person name="Brandon R.C."/>
            <person name="Rogers Y.-H.C."/>
            <person name="Blazej R.G."/>
            <person name="Champe M."/>
            <person name="Pfeiffer B.D."/>
            <person name="Wan K.H."/>
            <person name="Doyle C."/>
            <person name="Baxter E.G."/>
            <person name="Helt G."/>
            <person name="Nelson C.R."/>
            <person name="Miklos G.L.G."/>
            <person name="Abril J.F."/>
            <person name="Agbayani A."/>
            <person name="An H.-J."/>
            <person name="Andrews-Pfannkoch C."/>
            <person name="Baldwin D."/>
            <person name="Ballew R.M."/>
            <person name="Basu A."/>
            <person name="Baxendale J."/>
            <person name="Bayraktaroglu L."/>
            <person name="Beasley E.M."/>
            <person name="Beeson K.Y."/>
            <person name="Benos P.V."/>
            <person name="Berman B.P."/>
            <person name="Bhandari D."/>
            <person name="Bolshakov S."/>
            <person name="Borkova D."/>
            <person name="Botchan M.R."/>
            <person name="Bouck J."/>
            <person name="Brokstein P."/>
            <person name="Brottier P."/>
            <person name="Burtis K.C."/>
            <person name="Busam D.A."/>
            <person name="Butler H."/>
            <person name="Cadieu E."/>
            <person name="Center A."/>
            <person name="Chandra I."/>
            <person name="Cherry J.M."/>
            <person name="Cawley S."/>
            <person name="Dahlke C."/>
            <person name="Davenport L.B."/>
            <person name="Davies P."/>
            <person name="de Pablos B."/>
            <person name="Delcher A."/>
            <person name="Deng Z."/>
            <person name="Mays A.D."/>
            <person name="Dew I."/>
            <person name="Dietz S.M."/>
            <person name="Dodson K."/>
            <person name="Doup L.E."/>
            <person name="Downes M."/>
            <person name="Dugan-Rocha S."/>
            <person name="Dunkov B.C."/>
            <person name="Dunn P."/>
            <person name="Durbin K.J."/>
            <person name="Evangelista C.C."/>
            <person name="Ferraz C."/>
            <person name="Ferriera S."/>
            <person name="Fleischmann W."/>
            <person name="Fosler C."/>
            <person name="Gabrielian A.E."/>
            <person name="Garg N.S."/>
            <person name="Gelbart W.M."/>
            <person name="Glasser K."/>
            <person name="Glodek A."/>
            <person name="Gong F."/>
            <person name="Gorrell J.H."/>
            <person name="Gu Z."/>
            <person name="Guan P."/>
            <person name="Harris M."/>
            <person name="Harris N.L."/>
            <person name="Harvey D.A."/>
            <person name="Heiman T.J."/>
            <person name="Hernandez J.R."/>
            <person name="Houck J."/>
            <person name="Hostin D."/>
            <person name="Houston K.A."/>
            <person name="Howland T.J."/>
            <person name="Wei M.-H."/>
            <person name="Ibegwam C."/>
            <person name="Jalali M."/>
            <person name="Kalush F."/>
            <person name="Karpen G.H."/>
            <person name="Ke Z."/>
            <person name="Kennison J.A."/>
            <person name="Ketchum K.A."/>
            <person name="Kimmel B.E."/>
            <person name="Kodira C.D."/>
            <person name="Kraft C.L."/>
            <person name="Kravitz S."/>
            <person name="Kulp D."/>
            <person name="Lai Z."/>
            <person name="Lasko P."/>
            <person name="Lei Y."/>
            <person name="Levitsky A.A."/>
            <person name="Li J.H."/>
            <person name="Li Z."/>
            <person name="Liang Y."/>
            <person name="Lin X."/>
            <person name="Liu X."/>
            <person name="Mattei B."/>
            <person name="McIntosh T.C."/>
            <person name="McLeod M.P."/>
            <person name="McPherson D."/>
            <person name="Merkulov G."/>
            <person name="Milshina N.V."/>
            <person name="Mobarry C."/>
            <person name="Morris J."/>
            <person name="Moshrefi A."/>
            <person name="Mount S.M."/>
            <person name="Moy M."/>
            <person name="Murphy B."/>
            <person name="Murphy L."/>
            <person name="Muzny D.M."/>
            <person name="Nelson D.L."/>
            <person name="Nelson D.R."/>
            <person name="Nelson K.A."/>
            <person name="Nixon K."/>
            <person name="Nusskern D.R."/>
            <person name="Pacleb J.M."/>
            <person name="Palazzolo M."/>
            <person name="Pittman G.S."/>
            <person name="Pan S."/>
            <person name="Pollard J."/>
            <person name="Puri V."/>
            <person name="Reese M.G."/>
            <person name="Reinert K."/>
            <person name="Remington K."/>
            <person name="Saunders R.D.C."/>
            <person name="Scheeler F."/>
            <person name="Shen H."/>
            <person name="Shue B.C."/>
            <person name="Siden-Kiamos I."/>
            <person name="Simpson M."/>
            <person name="Skupski M.P."/>
            <person name="Smith T.J."/>
            <person name="Spier E."/>
            <person name="Spradling A.C."/>
            <person name="Stapleton M."/>
            <person name="Strong R."/>
            <person name="Sun E."/>
            <person name="Svirskas R."/>
            <person name="Tector C."/>
            <person name="Turner R."/>
            <person name="Venter E."/>
            <person name="Wang A.H."/>
            <person name="Wang X."/>
            <person name="Wang Z.-Y."/>
            <person name="Wassarman D.A."/>
            <person name="Weinstock G.M."/>
            <person name="Weissenbach J."/>
            <person name="Williams S.M."/>
            <person name="Woodage T."/>
            <person name="Worley K.C."/>
            <person name="Wu D."/>
            <person name="Yang S."/>
            <person name="Yao Q.A."/>
            <person name="Ye J."/>
            <person name="Yeh R.-F."/>
            <person name="Zaveri J.S."/>
            <person name="Zhan M."/>
            <person name="Zhang G."/>
            <person name="Zhao Q."/>
            <person name="Zheng L."/>
            <person name="Zheng X.H."/>
            <person name="Zhong F.N."/>
            <person name="Zhong W."/>
            <person name="Zhou X."/>
            <person name="Zhu S.C."/>
            <person name="Zhu X."/>
            <person name="Smith H.O."/>
            <person name="Gibbs R.A."/>
            <person name="Myers E.W."/>
            <person name="Rubin G.M."/>
            <person name="Venter J.C."/>
        </authorList>
    </citation>
    <scope>NUCLEOTIDE SEQUENCE [LARGE SCALE GENOMIC DNA]</scope>
    <source>
        <strain>Berkeley</strain>
    </source>
</reference>
<reference key="2">
    <citation type="journal article" date="2002" name="Genome Biol.">
        <title>Annotation of the Drosophila melanogaster euchromatic genome: a systematic review.</title>
        <authorList>
            <person name="Misra S."/>
            <person name="Crosby M.A."/>
            <person name="Mungall C.J."/>
            <person name="Matthews B.B."/>
            <person name="Campbell K.S."/>
            <person name="Hradecky P."/>
            <person name="Huang Y."/>
            <person name="Kaminker J.S."/>
            <person name="Millburn G.H."/>
            <person name="Prochnik S.E."/>
            <person name="Smith C.D."/>
            <person name="Tupy J.L."/>
            <person name="Whitfield E.J."/>
            <person name="Bayraktaroglu L."/>
            <person name="Berman B.P."/>
            <person name="Bettencourt B.R."/>
            <person name="Celniker S.E."/>
            <person name="de Grey A.D.N.J."/>
            <person name="Drysdale R.A."/>
            <person name="Harris N.L."/>
            <person name="Richter J."/>
            <person name="Russo S."/>
            <person name="Schroeder A.J."/>
            <person name="Shu S.Q."/>
            <person name="Stapleton M."/>
            <person name="Yamada C."/>
            <person name="Ashburner M."/>
            <person name="Gelbart W.M."/>
            <person name="Rubin G.M."/>
            <person name="Lewis S.E."/>
        </authorList>
    </citation>
    <scope>GENOME REANNOTATION</scope>
    <source>
        <strain>Berkeley</strain>
    </source>
</reference>
<reference key="3">
    <citation type="journal article" date="2007" name="Mol. Biosyst.">
        <title>An integrated chemical, mass spectrometric and computational strategy for (quantitative) phosphoproteomics: application to Drosophila melanogaster Kc167 cells.</title>
        <authorList>
            <person name="Bodenmiller B."/>
            <person name="Mueller L.N."/>
            <person name="Pedrioli P.G.A."/>
            <person name="Pflieger D."/>
            <person name="Juenger M.A."/>
            <person name="Eng J.K."/>
            <person name="Aebersold R."/>
            <person name="Tao W.A."/>
        </authorList>
    </citation>
    <scope>PHOSPHORYLATION [LARGE SCALE ANALYSIS] AT SER-231</scope>
    <scope>IDENTIFICATION BY MASS SPECTROMETRY</scope>
</reference>
<reference key="4">
    <citation type="journal article" date="2008" name="J. Proteome Res.">
        <title>Phosphoproteome analysis of Drosophila melanogaster embryos.</title>
        <authorList>
            <person name="Zhai B."/>
            <person name="Villen J."/>
            <person name="Beausoleil S.A."/>
            <person name="Mintseris J."/>
            <person name="Gygi S.P."/>
        </authorList>
    </citation>
    <scope>PHOSPHORYLATION [LARGE SCALE ANALYSIS] AT SER-468 AND THR-475</scope>
    <scope>IDENTIFICATION BY MASS SPECTROMETRY</scope>
    <source>
        <tissue>Embryo</tissue>
    </source>
</reference>
<proteinExistence type="evidence at protein level"/>
<organism>
    <name type="scientific">Drosophila melanogaster</name>
    <name type="common">Fruit fly</name>
    <dbReference type="NCBI Taxonomy" id="7227"/>
    <lineage>
        <taxon>Eukaryota</taxon>
        <taxon>Metazoa</taxon>
        <taxon>Ecdysozoa</taxon>
        <taxon>Arthropoda</taxon>
        <taxon>Hexapoda</taxon>
        <taxon>Insecta</taxon>
        <taxon>Pterygota</taxon>
        <taxon>Neoptera</taxon>
        <taxon>Endopterygota</taxon>
        <taxon>Diptera</taxon>
        <taxon>Brachycera</taxon>
        <taxon>Muscomorpha</taxon>
        <taxon>Ephydroidea</taxon>
        <taxon>Drosophilidae</taxon>
        <taxon>Drosophila</taxon>
        <taxon>Sophophora</taxon>
    </lineage>
</organism>
<gene>
    <name type="ORF">CG14230</name>
</gene>
<accession>Q9VWD4</accession>
<dbReference type="EMBL" id="AE014298">
    <property type="protein sequence ID" value="AAF49010.2"/>
    <property type="molecule type" value="Genomic_DNA"/>
</dbReference>
<dbReference type="RefSeq" id="NP_608349.1">
    <property type="nucleotide sequence ID" value="NM_134505.3"/>
</dbReference>
<dbReference type="SMR" id="Q9VWD4"/>
<dbReference type="BioGRID" id="59280">
    <property type="interactions" value="1"/>
</dbReference>
<dbReference type="FunCoup" id="Q9VWD4">
    <property type="interactions" value="1383"/>
</dbReference>
<dbReference type="IntAct" id="Q9VWD4">
    <property type="interactions" value="9"/>
</dbReference>
<dbReference type="STRING" id="7227.FBpp0074556"/>
<dbReference type="iPTMnet" id="Q9VWD4"/>
<dbReference type="PaxDb" id="7227-FBpp0074556"/>
<dbReference type="EnsemblMetazoa" id="FBtr0074787">
    <property type="protein sequence ID" value="FBpp0074556"/>
    <property type="gene ID" value="FBgn0031062"/>
</dbReference>
<dbReference type="GeneID" id="32984"/>
<dbReference type="KEGG" id="dme:Dmel_CG14230"/>
<dbReference type="UCSC" id="CG14230-RA">
    <property type="organism name" value="d. melanogaster"/>
</dbReference>
<dbReference type="AGR" id="FB:FBgn0031062"/>
<dbReference type="FlyBase" id="FBgn0031062">
    <property type="gene designation" value="CG14230"/>
</dbReference>
<dbReference type="VEuPathDB" id="VectorBase:FBgn0031062"/>
<dbReference type="eggNOG" id="KOG4365">
    <property type="taxonomic scope" value="Eukaryota"/>
</dbReference>
<dbReference type="GeneTree" id="ENSGT00390000004860"/>
<dbReference type="HOGENOM" id="CLU_467918_0_0_1"/>
<dbReference type="InParanoid" id="Q9VWD4"/>
<dbReference type="OMA" id="NWQKLHG"/>
<dbReference type="OrthoDB" id="21643at2759"/>
<dbReference type="PhylomeDB" id="Q9VWD4"/>
<dbReference type="BioGRID-ORCS" id="32984">
    <property type="hits" value="0 hits in 1 CRISPR screen"/>
</dbReference>
<dbReference type="GenomeRNAi" id="32984"/>
<dbReference type="PRO" id="PR:Q9VWD4"/>
<dbReference type="Proteomes" id="UP000000803">
    <property type="component" value="Chromosome X"/>
</dbReference>
<dbReference type="Bgee" id="FBgn0031062">
    <property type="expression patterns" value="Expressed in posterior terminal follicle cell in ovary and 53 other cell types or tissues"/>
</dbReference>
<dbReference type="GO" id="GO:0016607">
    <property type="term" value="C:nuclear speck"/>
    <property type="evidence" value="ECO:0000318"/>
    <property type="project" value="GO_Central"/>
</dbReference>
<dbReference type="GO" id="GO:0003729">
    <property type="term" value="F:mRNA binding"/>
    <property type="evidence" value="ECO:0000250"/>
    <property type="project" value="FlyBase"/>
</dbReference>
<dbReference type="GO" id="GO:0003723">
    <property type="term" value="F:RNA binding"/>
    <property type="evidence" value="ECO:0000318"/>
    <property type="project" value="GO_Central"/>
</dbReference>
<dbReference type="GO" id="GO:0000398">
    <property type="term" value="P:mRNA splicing, via spliceosome"/>
    <property type="evidence" value="ECO:0000318"/>
    <property type="project" value="GO_Central"/>
</dbReference>
<dbReference type="CDD" id="cd00590">
    <property type="entry name" value="RRM_SF"/>
    <property type="match status" value="1"/>
</dbReference>
<dbReference type="FunFam" id="3.30.70.330:FF:001329">
    <property type="entry name" value="GM22984"/>
    <property type="match status" value="1"/>
</dbReference>
<dbReference type="Gene3D" id="3.30.70.330">
    <property type="match status" value="1"/>
</dbReference>
<dbReference type="InterPro" id="IPR012677">
    <property type="entry name" value="Nucleotide-bd_a/b_plait_sf"/>
</dbReference>
<dbReference type="InterPro" id="IPR035979">
    <property type="entry name" value="RBD_domain_sf"/>
</dbReference>
<dbReference type="InterPro" id="IPR000504">
    <property type="entry name" value="RRM_dom"/>
</dbReference>
<dbReference type="PANTHER" id="PTHR48029">
    <property type="entry name" value="NUCLEOLAR PROTEIN 8"/>
    <property type="match status" value="1"/>
</dbReference>
<dbReference type="PANTHER" id="PTHR48029:SF1">
    <property type="entry name" value="NUCLEOLAR PROTEIN 8"/>
    <property type="match status" value="1"/>
</dbReference>
<dbReference type="Pfam" id="PF00076">
    <property type="entry name" value="RRM_1"/>
    <property type="match status" value="1"/>
</dbReference>
<dbReference type="SMART" id="SM00360">
    <property type="entry name" value="RRM"/>
    <property type="match status" value="1"/>
</dbReference>
<dbReference type="SUPFAM" id="SSF54928">
    <property type="entry name" value="RNA-binding domain, RBD"/>
    <property type="match status" value="1"/>
</dbReference>
<dbReference type="PROSITE" id="PS50102">
    <property type="entry name" value="RRM"/>
    <property type="match status" value="1"/>
</dbReference>
<sequence length="580" mass="66288">MGSTRFFLADLPTRTSESDLQILFQDYGHVEHVDLKRKEQDGATKVIAFVTVQTDDAQYCVNELKWQKLHGEKLRVSLAKESFLDRLKREREENQRREQGEPDESEVRAPSSQLLVQSGQNKRRVFGEDEEIGDDEVAPELLITKKRAANSMHNGRIVIQQEHDVKPLHVIEQHRKAAKQKPDANVSQAEQKRKESLNKMRQGHQQKKSAIQQALSVISVEGSQAKRIKFSDAEEEEASKPVQKAKIQKRDLFENDDDEEEEQIVLPQHKGKKGERLVEMQSKQSIDPRFRITSNFVNEEEEAELEDQPEPEESERKWHMNILEQVVGHAITSANDKDGKSPKNKKMLRFDPAKEGHQKLMRQKQPKEEEEKKEETSSTKAKTADAGNSQASAVSKTAFYIVTDTLRDSLNTRGEGFSLLDMFGSAPEKEVAKRQDQLEKLGHEKILVGKTSANKLGLATLNPFSYDSSDSEDETEVKPKQEQEQEQELEVSKENKAQPAKKSGQKRNKNKLESFFIPRNDPRLKEGAKFFKSTKAVVDHAEYDQVKNRLKLLITKKIAKAKKSLPSKDIKLQRNKKGKN</sequence>
<protein>
    <recommendedName>
        <fullName>Probable RNA-binding protein CG14230</fullName>
    </recommendedName>
</protein>